<sequence length="326" mass="37295">MREVLLSECIDLLYESHFVISKPFGRSCFDLIAKKADLRFLIKILKNIDSLSTEQSEELLNIAKMLQAVPIIIGTRTRNSVMEEGAVYERYGIKAVTFNTFRDQLFGEPPVVYANRGGFFVNIDGAVLRETREKLKISVGELAEISRVSRKTIYKYEQNEANPSAEVAIKIEEYLDVPLIKGINIVDYMEGLKSQKSREEAFEKILKESEDFKIRVIDILGDMGFNLLETTKAPFDAVAEESKEDDSENQNIIFTNIQETENEEIRRKAMIVDEISKMLNSHSLLVLEKKTNENKRITSMSISELEKIGDTVDLLEFIEKKKKSTK</sequence>
<reference key="1">
    <citation type="submission" date="2007-03" db="EMBL/GenBank/DDBJ databases">
        <title>Complete sequence of chromosome of Methanococcus maripaludis C5.</title>
        <authorList>
            <consortium name="US DOE Joint Genome Institute"/>
            <person name="Copeland A."/>
            <person name="Lucas S."/>
            <person name="Lapidus A."/>
            <person name="Barry K."/>
            <person name="Glavina del Rio T."/>
            <person name="Dalin E."/>
            <person name="Tice H."/>
            <person name="Pitluck S."/>
            <person name="Chertkov O."/>
            <person name="Brettin T."/>
            <person name="Bruce D."/>
            <person name="Han C."/>
            <person name="Detter J.C."/>
            <person name="Schmutz J."/>
            <person name="Larimer F."/>
            <person name="Land M."/>
            <person name="Hauser L."/>
            <person name="Kyrpides N."/>
            <person name="Mikhailova N."/>
            <person name="Sieprawska-Lupa M."/>
            <person name="Whitman W.B."/>
            <person name="Richardson P."/>
        </authorList>
    </citation>
    <scope>NUCLEOTIDE SEQUENCE [LARGE SCALE GENOMIC DNA]</scope>
    <source>
        <strain>C5 / ATCC BAA-1333</strain>
    </source>
</reference>
<dbReference type="EMBL" id="CP000609">
    <property type="protein sequence ID" value="ABO35205.1"/>
    <property type="molecule type" value="Genomic_DNA"/>
</dbReference>
<dbReference type="RefSeq" id="WP_011868659.1">
    <property type="nucleotide sequence ID" value="NC_009135.1"/>
</dbReference>
<dbReference type="SMR" id="A4FYC1"/>
<dbReference type="STRING" id="402880.MmarC5_0898"/>
<dbReference type="GeneID" id="4927750"/>
<dbReference type="KEGG" id="mmq:MmarC5_0898"/>
<dbReference type="eggNOG" id="arCOG04152">
    <property type="taxonomic scope" value="Archaea"/>
</dbReference>
<dbReference type="HOGENOM" id="CLU_075726_0_0_2"/>
<dbReference type="OrthoDB" id="31424at2157"/>
<dbReference type="Proteomes" id="UP000000253">
    <property type="component" value="Chromosome"/>
</dbReference>
<dbReference type="GO" id="GO:0003677">
    <property type="term" value="F:DNA binding"/>
    <property type="evidence" value="ECO:0007669"/>
    <property type="project" value="UniProtKB-KW"/>
</dbReference>
<dbReference type="GO" id="GO:0003700">
    <property type="term" value="F:DNA-binding transcription factor activity"/>
    <property type="evidence" value="ECO:0007669"/>
    <property type="project" value="UniProtKB-UniRule"/>
</dbReference>
<dbReference type="CDD" id="cd00093">
    <property type="entry name" value="HTH_XRE"/>
    <property type="match status" value="1"/>
</dbReference>
<dbReference type="Gene3D" id="1.10.260.40">
    <property type="entry name" value="lambda repressor-like DNA-binding domains"/>
    <property type="match status" value="1"/>
</dbReference>
<dbReference type="HAMAP" id="MF_00584">
    <property type="entry name" value="HTH_type_cro_C1"/>
    <property type="match status" value="1"/>
</dbReference>
<dbReference type="InterPro" id="IPR020886">
    <property type="entry name" value="Arc_TR_HTH"/>
</dbReference>
<dbReference type="InterPro" id="IPR001387">
    <property type="entry name" value="Cro/C1-type_HTH"/>
</dbReference>
<dbReference type="InterPro" id="IPR010982">
    <property type="entry name" value="Lambda_DNA-bd_dom_sf"/>
</dbReference>
<dbReference type="NCBIfam" id="NF003162">
    <property type="entry name" value="PRK04140.1"/>
    <property type="match status" value="1"/>
</dbReference>
<dbReference type="Pfam" id="PF01381">
    <property type="entry name" value="HTH_3"/>
    <property type="match status" value="1"/>
</dbReference>
<dbReference type="SMART" id="SM00530">
    <property type="entry name" value="HTH_XRE"/>
    <property type="match status" value="1"/>
</dbReference>
<dbReference type="SUPFAM" id="SSF47413">
    <property type="entry name" value="lambda repressor-like DNA-binding domains"/>
    <property type="match status" value="1"/>
</dbReference>
<dbReference type="PROSITE" id="PS50943">
    <property type="entry name" value="HTH_CROC1"/>
    <property type="match status" value="1"/>
</dbReference>
<organism>
    <name type="scientific">Methanococcus maripaludis (strain C5 / ATCC BAA-1333)</name>
    <dbReference type="NCBI Taxonomy" id="402880"/>
    <lineage>
        <taxon>Archaea</taxon>
        <taxon>Methanobacteriati</taxon>
        <taxon>Methanobacteriota</taxon>
        <taxon>Methanomada group</taxon>
        <taxon>Methanococci</taxon>
        <taxon>Methanococcales</taxon>
        <taxon>Methanococcaceae</taxon>
        <taxon>Methanococcus</taxon>
    </lineage>
</organism>
<name>Y898_METM5</name>
<feature type="chain" id="PRO_1000082409" description="Putative HTH-type transcriptional regulatory protein MmarC5_0898">
    <location>
        <begin position="1"/>
        <end position="326"/>
    </location>
</feature>
<feature type="domain" description="HTH cro/C1-type" evidence="1">
    <location>
        <begin position="128"/>
        <end position="183"/>
    </location>
</feature>
<feature type="DNA-binding region" description="H-T-H motif" evidence="1">
    <location>
        <begin position="139"/>
        <end position="158"/>
    </location>
</feature>
<proteinExistence type="inferred from homology"/>
<evidence type="ECO:0000255" key="1">
    <source>
        <dbReference type="HAMAP-Rule" id="MF_00584"/>
    </source>
</evidence>
<gene>
    <name type="ordered locus">MmarC5_0898</name>
</gene>
<accession>A4FYC1</accession>
<protein>
    <recommendedName>
        <fullName evidence="1">Putative HTH-type transcriptional regulatory protein MmarC5_0898</fullName>
    </recommendedName>
</protein>
<keyword id="KW-0238">DNA-binding</keyword>
<keyword id="KW-0804">Transcription</keyword>
<keyword id="KW-0805">Transcription regulation</keyword>